<comment type="function">
    <text>Catalyzes the cyclization of the ubiquitous isoprenoid intermediate geranylgeranyl diphosphate to taxa-4,11-diene, the parent olefin with a taxane skeleton.</text>
</comment>
<comment type="catalytic activity">
    <reaction>
        <text>(2E,6E,10E)-geranylgeranyl diphosphate = taxa-4(5),11(12)-diene + diphosphate</text>
        <dbReference type="Rhea" id="RHEA:20912"/>
        <dbReference type="ChEBI" id="CHEBI:30037"/>
        <dbReference type="ChEBI" id="CHEBI:33019"/>
        <dbReference type="ChEBI" id="CHEBI:58756"/>
        <dbReference type="EC" id="4.2.3.17"/>
    </reaction>
</comment>
<comment type="cofactor">
    <cofactor evidence="1">
        <name>Mg(2+)</name>
        <dbReference type="ChEBI" id="CHEBI:18420"/>
    </cofactor>
    <text evidence="1">Binds 3 Mg(2+) ions per subunit.</text>
</comment>
<comment type="pathway">
    <text>Alkaloid biosynthesis; taxol biosynthesis; taxa-4(20),11-dien-5alpha-ol from geranylgeranyl diphosphate: step 1/2.</text>
</comment>
<comment type="domain">
    <text>The Asp-Asp-Xaa-Xaa-Asp/Glu (DDXXD/E) motif is important for the catalytic activity, presumably through binding to Mg(2+).</text>
</comment>
<comment type="similarity">
    <text evidence="2">Belongs to the terpene synthase family.</text>
</comment>
<organism>
    <name type="scientific">Taxus brevifolia</name>
    <name type="common">Pacific yew</name>
    <dbReference type="NCBI Taxonomy" id="46220"/>
    <lineage>
        <taxon>Eukaryota</taxon>
        <taxon>Viridiplantae</taxon>
        <taxon>Streptophyta</taxon>
        <taxon>Embryophyta</taxon>
        <taxon>Tracheophyta</taxon>
        <taxon>Spermatophyta</taxon>
        <taxon>Pinopsida</taxon>
        <taxon>Pinidae</taxon>
        <taxon>Conifers II</taxon>
        <taxon>Cupressales</taxon>
        <taxon>Taxaceae</taxon>
        <taxon>Taxus</taxon>
    </lineage>
</organism>
<keyword id="KW-0002">3D-structure</keyword>
<keyword id="KW-0456">Lyase</keyword>
<keyword id="KW-0460">Magnesium</keyword>
<keyword id="KW-0479">Metal-binding</keyword>
<keyword id="KW-0876">Taxol biosynthesis</keyword>
<sequence length="862" mass="98304">MAQLSFNAALKMNALGNKAIHDPTNCRAKSERQMMWVCSRSGRTRVKMSRGSGGPGPVVMMSSSTGTSKVVSETSSTIVDDIPRLSANYHGDLWHHNVIQTLETPFRESSTYQERADELVVKIKDMFNALGDGDISPSAYDTAWVARLATISSDGSEKPRFPQALNWVFNNQLQDGSWGIESHFSLCDRLLNTTNSVIALSVWKTGHSQVQQGAEFIAENLRLLNEEDELSPDFQIIFPALLQKAKALGINLPYDLPFIKYLSTTREARLTDVSAAADNIPANMLNALEGLEEVIDWNKIMRFQSKDGSFLSSPASTACVLMNTGDEKCFTFLNNLLDKFGGCVPCMYSIDLLERLSLVDNIEHLGIGRHFKQEIKGALDYVYRHWSERGIGWGRDSLVPDLNTTALGLRTLRMHGYNVSSDVLNNFKDENGRFFSSAGQTHVELRSVVNLFRASDLAFPDERAMDDARKFAEPYLREALATKISTNTKLFKEIEYVVEYPWHMSIPRLEARSYIDSYDDNYVWQRKTLYRMPSLSNSKCLELAKLDFNIVQSLHQEELKLLTRWWKESGMADINFTRHRVAEVYFSSATFEPEYSATRIAFTKIGCLQVLFDDMADIFATLDELKSFTEGVKRWDTSLLHEIPECMQTCFKVWFKLMEEVNNDVVKVQGRDMLAHIRKPWELYFNCYVQEREWLEAGYIPTFEEYLKTYAISVGLGPCTLQPILLMGELVKDDVVEKVHYPSNMFELVSLSWRLTNDTKTYQAEKARGQQASGIACYMKDNPGATEEDAIKHICRVVDRALKEASFEYFKPSNDIPMGCKSFIFNLRLCVQIFYKFIDGYGIANEEIKDYIRKVYIDPIQV</sequence>
<accession>Q41594</accession>
<accession>Q94FV8</accession>
<protein>
    <recommendedName>
        <fullName>Taxadiene synthase</fullName>
        <ecNumber>4.2.3.17</ecNumber>
    </recommendedName>
    <alternativeName>
        <fullName>Taxa-4(5),11(12)-diene synthase</fullName>
    </alternativeName>
</protein>
<dbReference type="EC" id="4.2.3.17"/>
<dbReference type="EMBL" id="U48796">
    <property type="protein sequence ID" value="AAC49310.1"/>
    <property type="molecule type" value="mRNA"/>
</dbReference>
<dbReference type="EMBL" id="AF326519">
    <property type="protein sequence ID" value="AAK83566.1"/>
    <property type="molecule type" value="Genomic_DNA"/>
</dbReference>
<dbReference type="PDB" id="3P5P">
    <property type="method" value="X-ray"/>
    <property type="resolution" value="1.82 A"/>
    <property type="chains" value="A=108-862"/>
</dbReference>
<dbReference type="PDB" id="3P5R">
    <property type="method" value="X-ray"/>
    <property type="resolution" value="2.25 A"/>
    <property type="chains" value="A/B=108-862"/>
</dbReference>
<dbReference type="PDBsum" id="3P5P"/>
<dbReference type="PDBsum" id="3P5R"/>
<dbReference type="SMR" id="Q41594"/>
<dbReference type="KEGG" id="ag:AAC49310"/>
<dbReference type="BioCyc" id="MetaCyc:MONOMER-13385"/>
<dbReference type="BRENDA" id="4.2.3.17">
    <property type="organism ID" value="6223"/>
</dbReference>
<dbReference type="SABIO-RK" id="Q41594"/>
<dbReference type="UniPathway" id="UPA00842">
    <property type="reaction ID" value="UER00806"/>
</dbReference>
<dbReference type="EvolutionaryTrace" id="Q41594"/>
<dbReference type="GO" id="GO:0000287">
    <property type="term" value="F:magnesium ion binding"/>
    <property type="evidence" value="ECO:0007669"/>
    <property type="project" value="InterPro"/>
</dbReference>
<dbReference type="GO" id="GO:0050553">
    <property type="term" value="F:taxadiene synthase activity"/>
    <property type="evidence" value="ECO:0007669"/>
    <property type="project" value="UniProtKB-EC"/>
</dbReference>
<dbReference type="GO" id="GO:0010333">
    <property type="term" value="F:terpene synthase activity"/>
    <property type="evidence" value="ECO:0007669"/>
    <property type="project" value="InterPro"/>
</dbReference>
<dbReference type="GO" id="GO:0042617">
    <property type="term" value="P:paclitaxel biosynthetic process"/>
    <property type="evidence" value="ECO:0007669"/>
    <property type="project" value="UniProtKB-UniPathway"/>
</dbReference>
<dbReference type="CDD" id="cd00684">
    <property type="entry name" value="Terpene_cyclase_plant_C1"/>
    <property type="match status" value="1"/>
</dbReference>
<dbReference type="FunFam" id="1.50.10.130:FF:000002">
    <property type="entry name" value="Ent-copalyl diphosphate synthase, chloroplastic"/>
    <property type="match status" value="1"/>
</dbReference>
<dbReference type="FunFam" id="1.10.600.10:FF:000005">
    <property type="entry name" value="Ent-kaur-16-ene synthase, chloroplastic"/>
    <property type="match status" value="1"/>
</dbReference>
<dbReference type="Gene3D" id="1.50.10.160">
    <property type="match status" value="1"/>
</dbReference>
<dbReference type="Gene3D" id="1.10.600.10">
    <property type="entry name" value="Farnesyl Diphosphate Synthase"/>
    <property type="match status" value="1"/>
</dbReference>
<dbReference type="Gene3D" id="1.50.10.130">
    <property type="entry name" value="Terpene synthase, N-terminal domain"/>
    <property type="match status" value="1"/>
</dbReference>
<dbReference type="InterPro" id="IPR008949">
    <property type="entry name" value="Isoprenoid_synthase_dom_sf"/>
</dbReference>
<dbReference type="InterPro" id="IPR034741">
    <property type="entry name" value="Terpene_cyclase-like_1_C"/>
</dbReference>
<dbReference type="InterPro" id="IPR044814">
    <property type="entry name" value="Terpene_cyclase_plant_C1"/>
</dbReference>
<dbReference type="InterPro" id="IPR001906">
    <property type="entry name" value="Terpene_synth_N"/>
</dbReference>
<dbReference type="InterPro" id="IPR036965">
    <property type="entry name" value="Terpene_synth_N_sf"/>
</dbReference>
<dbReference type="InterPro" id="IPR050148">
    <property type="entry name" value="Terpene_synthase-like"/>
</dbReference>
<dbReference type="InterPro" id="IPR005630">
    <property type="entry name" value="Terpene_synthase_metal-bd"/>
</dbReference>
<dbReference type="InterPro" id="IPR008930">
    <property type="entry name" value="Terpenoid_cyclase/PrenylTrfase"/>
</dbReference>
<dbReference type="PANTHER" id="PTHR31739:SF25">
    <property type="entry name" value="(E,E)-GERANYLLINALOOL SYNTHASE"/>
    <property type="match status" value="1"/>
</dbReference>
<dbReference type="PANTHER" id="PTHR31739">
    <property type="entry name" value="ENT-COPALYL DIPHOSPHATE SYNTHASE, CHLOROPLASTIC"/>
    <property type="match status" value="1"/>
</dbReference>
<dbReference type="Pfam" id="PF01397">
    <property type="entry name" value="Terpene_synth"/>
    <property type="match status" value="1"/>
</dbReference>
<dbReference type="Pfam" id="PF03936">
    <property type="entry name" value="Terpene_synth_C"/>
    <property type="match status" value="1"/>
</dbReference>
<dbReference type="SFLD" id="SFLDS00005">
    <property type="entry name" value="Isoprenoid_Synthase_Type_I"/>
    <property type="match status" value="1"/>
</dbReference>
<dbReference type="SFLD" id="SFLDG01019">
    <property type="entry name" value="Terpene_Cyclase_Like_1_C_Termi"/>
    <property type="match status" value="1"/>
</dbReference>
<dbReference type="SFLD" id="SFLDG01014">
    <property type="entry name" value="Terpene_Cyclase_Like_1_N-term"/>
    <property type="match status" value="1"/>
</dbReference>
<dbReference type="SUPFAM" id="SSF48239">
    <property type="entry name" value="Terpenoid cyclases/Protein prenyltransferases"/>
    <property type="match status" value="2"/>
</dbReference>
<dbReference type="SUPFAM" id="SSF48576">
    <property type="entry name" value="Terpenoid synthases"/>
    <property type="match status" value="1"/>
</dbReference>
<name>TASY_TAXBR</name>
<gene>
    <name type="primary">TDC1</name>
</gene>
<proteinExistence type="evidence at protein level"/>
<feature type="chain" id="PRO_0000186450" description="Taxadiene synthase">
    <location>
        <begin position="1"/>
        <end position="862"/>
    </location>
</feature>
<feature type="short sequence motif" description="DDXXD motif">
    <location>
        <begin position="613"/>
        <end position="617"/>
    </location>
</feature>
<feature type="binding site" evidence="1">
    <location>
        <position position="613"/>
    </location>
    <ligand>
        <name>Mg(2+)</name>
        <dbReference type="ChEBI" id="CHEBI:18420"/>
        <label>1</label>
    </ligand>
</feature>
<feature type="binding site" evidence="1">
    <location>
        <position position="613"/>
    </location>
    <ligand>
        <name>Mg(2+)</name>
        <dbReference type="ChEBI" id="CHEBI:18420"/>
        <label>2</label>
    </ligand>
</feature>
<feature type="binding site" evidence="1">
    <location>
        <position position="617"/>
    </location>
    <ligand>
        <name>Mg(2+)</name>
        <dbReference type="ChEBI" id="CHEBI:18420"/>
        <label>1</label>
    </ligand>
</feature>
<feature type="binding site" evidence="1">
    <location>
        <position position="617"/>
    </location>
    <ligand>
        <name>Mg(2+)</name>
        <dbReference type="ChEBI" id="CHEBI:18420"/>
        <label>2</label>
    </ligand>
</feature>
<feature type="binding site" evidence="1">
    <location>
        <position position="757"/>
    </location>
    <ligand>
        <name>Mg(2+)</name>
        <dbReference type="ChEBI" id="CHEBI:18420"/>
        <label>3</label>
    </ligand>
</feature>
<feature type="binding site" evidence="1">
    <location>
        <position position="761"/>
    </location>
    <ligand>
        <name>Mg(2+)</name>
        <dbReference type="ChEBI" id="CHEBI:18420"/>
        <label>3</label>
    </ligand>
</feature>
<feature type="binding site" evidence="1">
    <location>
        <position position="765"/>
    </location>
    <ligand>
        <name>Mg(2+)</name>
        <dbReference type="ChEBI" id="CHEBI:18420"/>
        <label>3</label>
    </ligand>
</feature>
<feature type="sequence conflict" description="In Ref. 2; AAK83566." evidence="2" ref="2">
    <original>L</original>
    <variation>V</variation>
    <location>
        <position position="148"/>
    </location>
</feature>
<feature type="sequence conflict" description="In Ref. 2; AAK83566." evidence="2" ref="2">
    <original>A</original>
    <variation>V</variation>
    <location>
        <position position="767"/>
    </location>
</feature>
<feature type="helix" evidence="3">
    <location>
        <begin position="112"/>
        <end position="128"/>
    </location>
</feature>
<feature type="helix" evidence="3">
    <location>
        <begin position="139"/>
        <end position="147"/>
    </location>
</feature>
<feature type="strand" evidence="3">
    <location>
        <begin position="149"/>
        <end position="151"/>
    </location>
</feature>
<feature type="strand" evidence="3">
    <location>
        <begin position="157"/>
        <end position="160"/>
    </location>
</feature>
<feature type="helix" evidence="3">
    <location>
        <begin position="162"/>
        <end position="170"/>
    </location>
</feature>
<feature type="strand" evidence="4">
    <location>
        <begin position="174"/>
        <end position="176"/>
    </location>
</feature>
<feature type="helix" evidence="3">
    <location>
        <begin position="186"/>
        <end position="202"/>
    </location>
</feature>
<feature type="helix" evidence="3">
    <location>
        <begin position="207"/>
        <end position="221"/>
    </location>
</feature>
<feature type="strand" evidence="4">
    <location>
        <begin position="226"/>
        <end position="228"/>
    </location>
</feature>
<feature type="helix" evidence="3">
    <location>
        <begin position="234"/>
        <end position="247"/>
    </location>
</feature>
<feature type="helix" evidence="3">
    <location>
        <begin position="257"/>
        <end position="274"/>
    </location>
</feature>
<feature type="helix" evidence="3">
    <location>
        <begin position="282"/>
        <end position="290"/>
    </location>
</feature>
<feature type="helix" evidence="3">
    <location>
        <begin position="292"/>
        <end position="294"/>
    </location>
</feature>
<feature type="helix" evidence="3">
    <location>
        <begin position="299"/>
        <end position="303"/>
    </location>
</feature>
<feature type="helix" evidence="3">
    <location>
        <begin position="314"/>
        <end position="324"/>
    </location>
</feature>
<feature type="helix" evidence="3">
    <location>
        <begin position="327"/>
        <end position="340"/>
    </location>
</feature>
<feature type="helix" evidence="3">
    <location>
        <begin position="351"/>
        <end position="365"/>
    </location>
</feature>
<feature type="helix" evidence="3">
    <location>
        <begin position="368"/>
        <end position="371"/>
    </location>
</feature>
<feature type="helix" evidence="3">
    <location>
        <begin position="372"/>
        <end position="384"/>
    </location>
</feature>
<feature type="helix" evidence="3">
    <location>
        <begin position="402"/>
        <end position="414"/>
    </location>
</feature>
<feature type="helix" evidence="3">
    <location>
        <begin position="421"/>
        <end position="427"/>
    </location>
</feature>
<feature type="helix" evidence="3">
    <location>
        <begin position="445"/>
        <end position="455"/>
    </location>
</feature>
<feature type="helix" evidence="3">
    <location>
        <begin position="463"/>
        <end position="482"/>
    </location>
</feature>
<feature type="strand" evidence="3">
    <location>
        <begin position="486"/>
        <end position="488"/>
    </location>
</feature>
<feature type="helix" evidence="3">
    <location>
        <begin position="489"/>
        <end position="499"/>
    </location>
</feature>
<feature type="helix" evidence="3">
    <location>
        <begin position="502"/>
        <end position="504"/>
    </location>
</feature>
<feature type="helix" evidence="3">
    <location>
        <begin position="507"/>
        <end position="517"/>
    </location>
</feature>
<feature type="strand" evidence="3">
    <location>
        <begin position="524"/>
        <end position="530"/>
    </location>
</feature>
<feature type="turn" evidence="3">
    <location>
        <begin position="533"/>
        <end position="535"/>
    </location>
</feature>
<feature type="helix" evidence="3">
    <location>
        <begin position="538"/>
        <end position="568"/>
    </location>
</feature>
<feature type="turn" evidence="3">
    <location>
        <begin position="571"/>
        <end position="575"/>
    </location>
</feature>
<feature type="helix" evidence="3">
    <location>
        <begin position="578"/>
        <end position="587"/>
    </location>
</feature>
<feature type="helix" evidence="3">
    <location>
        <begin position="593"/>
        <end position="595"/>
    </location>
</feature>
<feature type="helix" evidence="3">
    <location>
        <begin position="596"/>
        <end position="618"/>
    </location>
</feature>
<feature type="helix" evidence="3">
    <location>
        <begin position="622"/>
        <end position="634"/>
    </location>
</feature>
<feature type="helix" evidence="3">
    <location>
        <begin position="640"/>
        <end position="642"/>
    </location>
</feature>
<feature type="helix" evidence="3">
    <location>
        <begin position="645"/>
        <end position="669"/>
    </location>
</feature>
<feature type="helix" evidence="3">
    <location>
        <begin position="674"/>
        <end position="696"/>
    </location>
</feature>
<feature type="helix" evidence="3">
    <location>
        <begin position="703"/>
        <end position="713"/>
    </location>
</feature>
<feature type="helix" evidence="3">
    <location>
        <begin position="716"/>
        <end position="725"/>
    </location>
</feature>
<feature type="strand" evidence="3">
    <location>
        <begin position="727"/>
        <end position="729"/>
    </location>
</feature>
<feature type="helix" evidence="3">
    <location>
        <begin position="733"/>
        <end position="735"/>
    </location>
</feature>
<feature type="helix" evidence="3">
    <location>
        <begin position="736"/>
        <end position="739"/>
    </location>
</feature>
<feature type="helix" evidence="3">
    <location>
        <begin position="744"/>
        <end position="766"/>
    </location>
</feature>
<feature type="turn" evidence="3">
    <location>
        <begin position="767"/>
        <end position="769"/>
    </location>
</feature>
<feature type="helix" evidence="3">
    <location>
        <begin position="774"/>
        <end position="781"/>
    </location>
</feature>
<feature type="helix" evidence="3">
    <location>
        <begin position="787"/>
        <end position="810"/>
    </location>
</feature>
<feature type="strand" evidence="3">
    <location>
        <begin position="814"/>
        <end position="816"/>
    </location>
</feature>
<feature type="helix" evidence="3">
    <location>
        <begin position="818"/>
        <end position="826"/>
    </location>
</feature>
<feature type="helix" evidence="3">
    <location>
        <begin position="828"/>
        <end position="834"/>
    </location>
</feature>
<feature type="strand" evidence="4">
    <location>
        <begin position="840"/>
        <end position="842"/>
    </location>
</feature>
<feature type="strand" evidence="4">
    <location>
        <begin position="844"/>
        <end position="846"/>
    </location>
</feature>
<feature type="helix" evidence="3">
    <location>
        <begin position="848"/>
        <end position="856"/>
    </location>
</feature>
<reference key="1">
    <citation type="journal article" date="1996" name="J. Biol. Chem.">
        <title>A cDNA clone for taxadiene synthase, the diterpene cyclase that catalyzes the committed step of taxol biosynthesis.</title>
        <authorList>
            <person name="Wildung M.R."/>
            <person name="Croteau R.B."/>
        </authorList>
    </citation>
    <scope>NUCLEOTIDE SEQUENCE [MRNA]</scope>
</reference>
<reference key="2">
    <citation type="journal article" date="2001" name="Genetics">
        <title>Genomic organization of plant terpene synthases and molecular evolutionary implications.</title>
        <authorList>
            <person name="Trapp S.C."/>
            <person name="Croteau R.B."/>
        </authorList>
    </citation>
    <scope>NUCLEOTIDE SEQUENCE</scope>
</reference>
<evidence type="ECO:0000250" key="1"/>
<evidence type="ECO:0000305" key="2"/>
<evidence type="ECO:0007829" key="3">
    <source>
        <dbReference type="PDB" id="3P5P"/>
    </source>
</evidence>
<evidence type="ECO:0007829" key="4">
    <source>
        <dbReference type="PDB" id="3P5R"/>
    </source>
</evidence>